<organism>
    <name type="scientific">Haemophilus influenzae (strain ATCC 51907 / DSM 11121 / KW20 / Rd)</name>
    <dbReference type="NCBI Taxonomy" id="71421"/>
    <lineage>
        <taxon>Bacteria</taxon>
        <taxon>Pseudomonadati</taxon>
        <taxon>Pseudomonadota</taxon>
        <taxon>Gammaproteobacteria</taxon>
        <taxon>Pasteurellales</taxon>
        <taxon>Pasteurellaceae</taxon>
        <taxon>Haemophilus</taxon>
    </lineage>
</organism>
<protein>
    <recommendedName>
        <fullName>Stringent starvation protein B homolog</fullName>
    </recommendedName>
    <alternativeName>
        <fullName>Adapter protein SspB</fullName>
    </alternativeName>
    <alternativeName>
        <fullName>Specificity-enhancing factor SspB</fullName>
    </alternativeName>
</protein>
<sequence length="150" mass="17168">MEYKSSPKRPYLLRAYYDWLVDNSFTPYLVVDATYLGVNVPVEYVKDGQIVLNLSASATGNLQLTNDFIQFNARFKGVSRELYIPMGAALAIYARENGDGVMFEPEEIYDELNIEPDTEQPTGFYEAVDKPKKREEKKKTKSVSHLRIVD</sequence>
<name>SSPB_HAEIN</name>
<dbReference type="EMBL" id="L42023">
    <property type="protein sequence ID" value="AAC23089.1"/>
    <property type="molecule type" value="Genomic_DNA"/>
</dbReference>
<dbReference type="PIR" id="D64123">
    <property type="entry name" value="D64123"/>
</dbReference>
<dbReference type="RefSeq" id="NP_439592.1">
    <property type="nucleotide sequence ID" value="NC_000907.1"/>
</dbReference>
<dbReference type="PDB" id="1OU8">
    <property type="method" value="X-ray"/>
    <property type="resolution" value="1.60 A"/>
    <property type="chains" value="A/B=1-111"/>
</dbReference>
<dbReference type="PDB" id="1OU9">
    <property type="method" value="X-ray"/>
    <property type="resolution" value="1.80 A"/>
    <property type="chains" value="A/B/C=1-129"/>
</dbReference>
<dbReference type="PDB" id="1OUL">
    <property type="method" value="X-ray"/>
    <property type="resolution" value="2.20 A"/>
    <property type="chains" value="A/B=1-129"/>
</dbReference>
<dbReference type="PDB" id="1TWB">
    <property type="method" value="X-ray"/>
    <property type="resolution" value="1.90 A"/>
    <property type="chains" value="A/B=1-110"/>
</dbReference>
<dbReference type="PDB" id="1ZSZ">
    <property type="method" value="X-ray"/>
    <property type="resolution" value="2.00 A"/>
    <property type="chains" value="A=1-110, B=1-111, C=1-129"/>
</dbReference>
<dbReference type="PDBsum" id="1OU8"/>
<dbReference type="PDBsum" id="1OU9"/>
<dbReference type="PDBsum" id="1OUL"/>
<dbReference type="PDBsum" id="1TWB"/>
<dbReference type="PDBsum" id="1ZSZ"/>
<dbReference type="SMR" id="P45206"/>
<dbReference type="STRING" id="71421.HI_1440"/>
<dbReference type="EnsemblBacteria" id="AAC23089">
    <property type="protein sequence ID" value="AAC23089"/>
    <property type="gene ID" value="HI_1440"/>
</dbReference>
<dbReference type="KEGG" id="hin:HI_1440"/>
<dbReference type="PATRIC" id="fig|71421.8.peg.1502"/>
<dbReference type="eggNOG" id="COG2969">
    <property type="taxonomic scope" value="Bacteria"/>
</dbReference>
<dbReference type="HOGENOM" id="CLU_118425_0_0_6"/>
<dbReference type="OrthoDB" id="9797358at2"/>
<dbReference type="PhylomeDB" id="P45206"/>
<dbReference type="BioCyc" id="HINF71421:G1GJ1-1466-MONOMER"/>
<dbReference type="EvolutionaryTrace" id="P45206"/>
<dbReference type="Proteomes" id="UP000000579">
    <property type="component" value="Chromosome"/>
</dbReference>
<dbReference type="GO" id="GO:0005829">
    <property type="term" value="C:cytosol"/>
    <property type="evidence" value="ECO:0000318"/>
    <property type="project" value="GO_Central"/>
</dbReference>
<dbReference type="GO" id="GO:0005840">
    <property type="term" value="C:ribosome"/>
    <property type="evidence" value="ECO:0000318"/>
    <property type="project" value="GO_Central"/>
</dbReference>
<dbReference type="GO" id="GO:0045732">
    <property type="term" value="P:positive regulation of protein catabolic process"/>
    <property type="evidence" value="ECO:0000318"/>
    <property type="project" value="GO_Central"/>
</dbReference>
<dbReference type="Gene3D" id="2.30.30.220">
    <property type="entry name" value="SspB-like"/>
    <property type="match status" value="1"/>
</dbReference>
<dbReference type="InterPro" id="IPR007481">
    <property type="entry name" value="SspB"/>
</dbReference>
<dbReference type="InterPro" id="IPR036760">
    <property type="entry name" value="SspB-like_sf"/>
</dbReference>
<dbReference type="NCBIfam" id="NF008763">
    <property type="entry name" value="PRK11798.1-2"/>
    <property type="match status" value="1"/>
</dbReference>
<dbReference type="NCBIfam" id="NF008769">
    <property type="entry name" value="PRK11798.2-5"/>
    <property type="match status" value="1"/>
</dbReference>
<dbReference type="PANTHER" id="PTHR37486">
    <property type="entry name" value="STRINGENT STARVATION PROTEIN B"/>
    <property type="match status" value="1"/>
</dbReference>
<dbReference type="PANTHER" id="PTHR37486:SF1">
    <property type="entry name" value="STRINGENT STARVATION PROTEIN B"/>
    <property type="match status" value="1"/>
</dbReference>
<dbReference type="Pfam" id="PF04386">
    <property type="entry name" value="SspB"/>
    <property type="match status" value="1"/>
</dbReference>
<dbReference type="PIRSF" id="PIRSF005276">
    <property type="entry name" value="SspB"/>
    <property type="match status" value="1"/>
</dbReference>
<dbReference type="SUPFAM" id="SSF101738">
    <property type="entry name" value="SspB-like"/>
    <property type="match status" value="1"/>
</dbReference>
<feature type="chain" id="PRO_0000072220" description="Stringent starvation protein B homolog">
    <location>
        <begin position="1"/>
        <end position="150"/>
    </location>
</feature>
<feature type="region of interest" description="Disordered" evidence="2">
    <location>
        <begin position="114"/>
        <end position="150"/>
    </location>
</feature>
<feature type="compositionally biased region" description="Basic and acidic residues" evidence="2">
    <location>
        <begin position="127"/>
        <end position="138"/>
    </location>
</feature>
<feature type="helix" evidence="4">
    <location>
        <begin position="9"/>
        <end position="22"/>
    </location>
</feature>
<feature type="strand" evidence="4">
    <location>
        <begin position="27"/>
        <end position="32"/>
    </location>
</feature>
<feature type="strand" evidence="5">
    <location>
        <begin position="33"/>
        <end position="35"/>
    </location>
</feature>
<feature type="helix" evidence="4">
    <location>
        <begin position="42"/>
        <end position="44"/>
    </location>
</feature>
<feature type="strand" evidence="5">
    <location>
        <begin position="46"/>
        <end position="48"/>
    </location>
</feature>
<feature type="strand" evidence="4">
    <location>
        <begin position="49"/>
        <end position="53"/>
    </location>
</feature>
<feature type="turn" evidence="4">
    <location>
        <begin position="56"/>
        <end position="58"/>
    </location>
</feature>
<feature type="strand" evidence="4">
    <location>
        <begin position="60"/>
        <end position="64"/>
    </location>
</feature>
<feature type="strand" evidence="4">
    <location>
        <begin position="66"/>
        <end position="75"/>
    </location>
</feature>
<feature type="strand" evidence="4">
    <location>
        <begin position="78"/>
        <end position="85"/>
    </location>
</feature>
<feature type="helix" evidence="4">
    <location>
        <begin position="86"/>
        <end position="88"/>
    </location>
</feature>
<feature type="strand" evidence="4">
    <location>
        <begin position="89"/>
        <end position="94"/>
    </location>
</feature>
<feature type="turn" evidence="4">
    <location>
        <begin position="95"/>
        <end position="97"/>
    </location>
</feature>
<feature type="strand" evidence="4">
    <location>
        <begin position="100"/>
        <end position="102"/>
    </location>
</feature>
<feature type="helix" evidence="4">
    <location>
        <begin position="107"/>
        <end position="109"/>
    </location>
</feature>
<comment type="function">
    <text evidence="1">Enhances recognition of ssrA-tagged proteins by the ClpX-ClpP protease; the ssrA degradation tag (AANDENYALAA) is added trans-translationally to proteins that are stalled on the ribosome, freeing the ribosome and targeting stalled peptides for degradation. SspB activates the ATPase activity of ClpX. Seems to act in concert with SspA in the regulation of several proteins during exponential and stationary-phase growth (By similarity).</text>
</comment>
<comment type="function">
    <text evidence="1">Also stimulates degradation of the N-terminus of RseA (residues 1-108, alone or in complex with sigma-E) by ClpX-ClpP in a non-ssrA-mediated fashion.</text>
</comment>
<comment type="subunit">
    <text evidence="1">Homodimer.</text>
</comment>
<comment type="similarity">
    <text evidence="3">Belongs to the SspB family.</text>
</comment>
<keyword id="KW-0002">3D-structure</keyword>
<keyword id="KW-1185">Reference proteome</keyword>
<evidence type="ECO:0000250" key="1"/>
<evidence type="ECO:0000256" key="2">
    <source>
        <dbReference type="SAM" id="MobiDB-lite"/>
    </source>
</evidence>
<evidence type="ECO:0000305" key="3"/>
<evidence type="ECO:0007829" key="4">
    <source>
        <dbReference type="PDB" id="1OU8"/>
    </source>
</evidence>
<evidence type="ECO:0007829" key="5">
    <source>
        <dbReference type="PDB" id="1OUL"/>
    </source>
</evidence>
<reference key="1">
    <citation type="journal article" date="1995" name="Science">
        <title>Whole-genome random sequencing and assembly of Haemophilus influenzae Rd.</title>
        <authorList>
            <person name="Fleischmann R.D."/>
            <person name="Adams M.D."/>
            <person name="White O."/>
            <person name="Clayton R.A."/>
            <person name="Kirkness E.F."/>
            <person name="Kerlavage A.R."/>
            <person name="Bult C.J."/>
            <person name="Tomb J.-F."/>
            <person name="Dougherty B.A."/>
            <person name="Merrick J.M."/>
            <person name="McKenney K."/>
            <person name="Sutton G.G."/>
            <person name="FitzHugh W."/>
            <person name="Fields C.A."/>
            <person name="Gocayne J.D."/>
            <person name="Scott J.D."/>
            <person name="Shirley R."/>
            <person name="Liu L.-I."/>
            <person name="Glodek A."/>
            <person name="Kelley J.M."/>
            <person name="Weidman J.F."/>
            <person name="Phillips C.A."/>
            <person name="Spriggs T."/>
            <person name="Hedblom E."/>
            <person name="Cotton M.D."/>
            <person name="Utterback T.R."/>
            <person name="Hanna M.C."/>
            <person name="Nguyen D.T."/>
            <person name="Saudek D.M."/>
            <person name="Brandon R.C."/>
            <person name="Fine L.D."/>
            <person name="Fritchman J.L."/>
            <person name="Fuhrmann J.L."/>
            <person name="Geoghagen N.S.M."/>
            <person name="Gnehm C.L."/>
            <person name="McDonald L.A."/>
            <person name="Small K.V."/>
            <person name="Fraser C.M."/>
            <person name="Smith H.O."/>
            <person name="Venter J.C."/>
        </authorList>
    </citation>
    <scope>NUCLEOTIDE SEQUENCE [LARGE SCALE GENOMIC DNA]</scope>
    <source>
        <strain>ATCC 51907 / DSM 11121 / KW20 / Rd</strain>
    </source>
</reference>
<gene>
    <name type="primary">sspB</name>
    <name type="ordered locus">HI_1440</name>
</gene>
<accession>P45206</accession>
<proteinExistence type="evidence at protein level"/>